<reference key="1">
    <citation type="journal article" date="2007" name="Nature">
        <title>Evolution of genes and genomes on the Drosophila phylogeny.</title>
        <authorList>
            <consortium name="Drosophila 12 genomes consortium"/>
        </authorList>
    </citation>
    <scope>NUCLEOTIDE SEQUENCE [LARGE SCALE GENOMIC DNA]</scope>
    <source>
        <strain>Tucson 15287-2541.00</strain>
    </source>
</reference>
<organism>
    <name type="scientific">Drosophila grimshawi</name>
    <name type="common">Hawaiian fruit fly</name>
    <name type="synonym">Idiomyia grimshawi</name>
    <dbReference type="NCBI Taxonomy" id="7222"/>
    <lineage>
        <taxon>Eukaryota</taxon>
        <taxon>Metazoa</taxon>
        <taxon>Ecdysozoa</taxon>
        <taxon>Arthropoda</taxon>
        <taxon>Hexapoda</taxon>
        <taxon>Insecta</taxon>
        <taxon>Pterygota</taxon>
        <taxon>Neoptera</taxon>
        <taxon>Endopterygota</taxon>
        <taxon>Diptera</taxon>
        <taxon>Brachycera</taxon>
        <taxon>Muscomorpha</taxon>
        <taxon>Ephydroidea</taxon>
        <taxon>Drosophilidae</taxon>
        <taxon>Drosophila</taxon>
        <taxon>Hawaiian Drosophila</taxon>
    </lineage>
</organism>
<dbReference type="EC" id="5.6.2.-" evidence="2"/>
<dbReference type="EMBL" id="CH916371">
    <property type="protein sequence ID" value="EDV92365.1"/>
    <property type="molecule type" value="Genomic_DNA"/>
</dbReference>
<dbReference type="RefSeq" id="XP_001992658.1">
    <property type="nucleotide sequence ID" value="XM_001992622.1"/>
</dbReference>
<dbReference type="SMR" id="B4JNS2"/>
<dbReference type="FunCoup" id="B4JNS2">
    <property type="interactions" value="1878"/>
</dbReference>
<dbReference type="STRING" id="7222.B4JNS2"/>
<dbReference type="eggNOG" id="KOG1132">
    <property type="taxonomic scope" value="Eukaryota"/>
</dbReference>
<dbReference type="HOGENOM" id="CLU_006515_4_0_1"/>
<dbReference type="InParanoid" id="B4JNS2"/>
<dbReference type="OMA" id="NCATIVA"/>
<dbReference type="OrthoDB" id="19182at2759"/>
<dbReference type="PhylomeDB" id="B4JNS2"/>
<dbReference type="Proteomes" id="UP000001070">
    <property type="component" value="Unassembled WGS sequence"/>
</dbReference>
<dbReference type="GO" id="GO:0005634">
    <property type="term" value="C:nucleus"/>
    <property type="evidence" value="ECO:0000250"/>
    <property type="project" value="UniProtKB"/>
</dbReference>
<dbReference type="GO" id="GO:0051539">
    <property type="term" value="F:4 iron, 4 sulfur cluster binding"/>
    <property type="evidence" value="ECO:0007669"/>
    <property type="project" value="UniProtKB-UniRule"/>
</dbReference>
<dbReference type="GO" id="GO:0005524">
    <property type="term" value="F:ATP binding"/>
    <property type="evidence" value="ECO:0000250"/>
    <property type="project" value="UniProtKB"/>
</dbReference>
<dbReference type="GO" id="GO:0016887">
    <property type="term" value="F:ATP hydrolysis activity"/>
    <property type="evidence" value="ECO:0007669"/>
    <property type="project" value="RHEA"/>
</dbReference>
<dbReference type="GO" id="GO:0003682">
    <property type="term" value="F:chromatin binding"/>
    <property type="evidence" value="ECO:0007669"/>
    <property type="project" value="EnsemblMetazoa"/>
</dbReference>
<dbReference type="GO" id="GO:0003677">
    <property type="term" value="F:DNA binding"/>
    <property type="evidence" value="ECO:0007669"/>
    <property type="project" value="UniProtKB-UniRule"/>
</dbReference>
<dbReference type="GO" id="GO:0003678">
    <property type="term" value="F:DNA helicase activity"/>
    <property type="evidence" value="ECO:0000250"/>
    <property type="project" value="UniProtKB"/>
</dbReference>
<dbReference type="GO" id="GO:0070182">
    <property type="term" value="F:DNA polymerase binding"/>
    <property type="evidence" value="ECO:0007669"/>
    <property type="project" value="TreeGrafter"/>
</dbReference>
<dbReference type="GO" id="GO:0046872">
    <property type="term" value="F:metal ion binding"/>
    <property type="evidence" value="ECO:0007669"/>
    <property type="project" value="UniProtKB-UniRule"/>
</dbReference>
<dbReference type="GO" id="GO:0006310">
    <property type="term" value="P:DNA recombination"/>
    <property type="evidence" value="ECO:0007669"/>
    <property type="project" value="InterPro"/>
</dbReference>
<dbReference type="GO" id="GO:0006281">
    <property type="term" value="P:DNA repair"/>
    <property type="evidence" value="ECO:0007669"/>
    <property type="project" value="UniProtKB-UniRule"/>
</dbReference>
<dbReference type="GO" id="GO:0006260">
    <property type="term" value="P:DNA replication"/>
    <property type="evidence" value="ECO:0007669"/>
    <property type="project" value="InterPro"/>
</dbReference>
<dbReference type="GO" id="GO:0036098">
    <property type="term" value="P:male germ-line stem cell population maintenance"/>
    <property type="evidence" value="ECO:0007669"/>
    <property type="project" value="EnsemblMetazoa"/>
</dbReference>
<dbReference type="GO" id="GO:0045910">
    <property type="term" value="P:negative regulation of DNA recombination"/>
    <property type="evidence" value="ECO:0007669"/>
    <property type="project" value="TreeGrafter"/>
</dbReference>
<dbReference type="GO" id="GO:1904430">
    <property type="term" value="P:negative regulation of t-circle formation"/>
    <property type="evidence" value="ECO:0007669"/>
    <property type="project" value="TreeGrafter"/>
</dbReference>
<dbReference type="GO" id="GO:0010569">
    <property type="term" value="P:regulation of double-strand break repair via homologous recombination"/>
    <property type="evidence" value="ECO:0000250"/>
    <property type="project" value="UniProtKB"/>
</dbReference>
<dbReference type="GO" id="GO:0090657">
    <property type="term" value="P:telomeric loop disassembly"/>
    <property type="evidence" value="ECO:0007669"/>
    <property type="project" value="TreeGrafter"/>
</dbReference>
<dbReference type="CDD" id="cd17970">
    <property type="entry name" value="DEAHc_FancJ"/>
    <property type="match status" value="1"/>
</dbReference>
<dbReference type="CDD" id="cd13932">
    <property type="entry name" value="HN_RTEL1"/>
    <property type="match status" value="1"/>
</dbReference>
<dbReference type="CDD" id="cd18788">
    <property type="entry name" value="SF2_C_XPD"/>
    <property type="match status" value="1"/>
</dbReference>
<dbReference type="FunFam" id="3.40.50.300:FF:000431">
    <property type="entry name" value="Regulator of telomere elongation helicase 1"/>
    <property type="match status" value="1"/>
</dbReference>
<dbReference type="FunFam" id="1.20.1160.20:FF:000011">
    <property type="entry name" value="Regulator of telomere elongation helicase 1 homolog"/>
    <property type="match status" value="1"/>
</dbReference>
<dbReference type="Gene3D" id="1.20.1160.20">
    <property type="match status" value="1"/>
</dbReference>
<dbReference type="Gene3D" id="3.40.50.300">
    <property type="entry name" value="P-loop containing nucleotide triphosphate hydrolases"/>
    <property type="match status" value="2"/>
</dbReference>
<dbReference type="HAMAP" id="MF_03065">
    <property type="entry name" value="RTEL1"/>
    <property type="match status" value="1"/>
</dbReference>
<dbReference type="InterPro" id="IPR006555">
    <property type="entry name" value="ATP-dep_Helicase_C"/>
</dbReference>
<dbReference type="InterPro" id="IPR045028">
    <property type="entry name" value="DinG/Rad3-like"/>
</dbReference>
<dbReference type="InterPro" id="IPR014013">
    <property type="entry name" value="Helic_SF1/SF2_ATP-bd_DinG/Rad3"/>
</dbReference>
<dbReference type="InterPro" id="IPR006554">
    <property type="entry name" value="Helicase-like_DEXD_c2"/>
</dbReference>
<dbReference type="InterPro" id="IPR049909">
    <property type="entry name" value="HHD_RTEL1"/>
</dbReference>
<dbReference type="InterPro" id="IPR027417">
    <property type="entry name" value="P-loop_NTPase"/>
</dbReference>
<dbReference type="InterPro" id="IPR010614">
    <property type="entry name" value="RAD3-like_helicase_DEAD"/>
</dbReference>
<dbReference type="InterPro" id="IPR013020">
    <property type="entry name" value="Rad3/Chl1-like"/>
</dbReference>
<dbReference type="InterPro" id="IPR030845">
    <property type="entry name" value="RTEL1"/>
</dbReference>
<dbReference type="NCBIfam" id="TIGR00604">
    <property type="entry name" value="rad3"/>
    <property type="match status" value="1"/>
</dbReference>
<dbReference type="PANTHER" id="PTHR11472">
    <property type="entry name" value="DNA REPAIR DEAD HELICASE RAD3/XP-D SUBFAMILY MEMBER"/>
    <property type="match status" value="1"/>
</dbReference>
<dbReference type="PANTHER" id="PTHR11472:SF34">
    <property type="entry name" value="REGULATOR OF TELOMERE ELONGATION HELICASE 1"/>
    <property type="match status" value="1"/>
</dbReference>
<dbReference type="Pfam" id="PF23109">
    <property type="entry name" value="ARCH_RTEL1"/>
    <property type="match status" value="1"/>
</dbReference>
<dbReference type="Pfam" id="PF06733">
    <property type="entry name" value="DEAD_2"/>
    <property type="match status" value="1"/>
</dbReference>
<dbReference type="Pfam" id="PF13307">
    <property type="entry name" value="Helicase_C_2"/>
    <property type="match status" value="1"/>
</dbReference>
<dbReference type="SMART" id="SM00488">
    <property type="entry name" value="DEXDc2"/>
    <property type="match status" value="1"/>
</dbReference>
<dbReference type="SMART" id="SM00491">
    <property type="entry name" value="HELICc2"/>
    <property type="match status" value="1"/>
</dbReference>
<dbReference type="SUPFAM" id="SSF52540">
    <property type="entry name" value="P-loop containing nucleoside triphosphate hydrolases"/>
    <property type="match status" value="2"/>
</dbReference>
<dbReference type="PROSITE" id="PS51193">
    <property type="entry name" value="HELICASE_ATP_BIND_2"/>
    <property type="match status" value="1"/>
</dbReference>
<proteinExistence type="inferred from homology"/>
<evidence type="ECO:0000250" key="1"/>
<evidence type="ECO:0000255" key="2">
    <source>
        <dbReference type="HAMAP-Rule" id="MF_03065"/>
    </source>
</evidence>
<gene>
    <name type="ORF">GH24089</name>
</gene>
<name>RTEL1_DROGR</name>
<protein>
    <recommendedName>
        <fullName evidence="2">Regulator of telomere elongation helicase 1 homolog</fullName>
        <ecNumber evidence="2">5.6.2.-</ecNumber>
    </recommendedName>
</protein>
<accession>B4JNS2</accession>
<sequence>MPENIIAGIPVHFPFEPYDVQRAYMEKVIICLRDGTNGVLESPTGTGKTLSLLCSTLGWIRTRQSEVQLNMQKLQHDQQTQLTGAAGAGAAMGSEIAAVIGKSNNWGVPKVIYASRTHSQLTQAMRELKRTAYANMRAVVLGSRDQLCIHPDVMREQGNSNKVNMCKLKVHAKSCTFQLRVESKKDHPDFRGPSIMDIEDLVKVGQRLKMCPYFASKELVNSADITFMPYNYLLDPKARKANKIELSNAIVILDEGHNIEKICEESASVQIRSSDVAIAIEDVTHIMKIFTSSSDSQDTAGPDEPKDFTIDDLTLLKEMLLELEKAIDGVIVDNKADGATYPASYMYELLGKANFTHGNCATIVALLDKLVQYLMVASQHSMLRKGGSFMVLADLLNIVFANKGDIMSKVSCSFKVHAEIEESKQSQTNNKAQTGWLGKGNNNAASSASKTGRIINFWCFNPGFGMEQLLNTHVRSVILTSGTLAPLKPLIAELAIPVAQHLENPHIVNEAQVYVKIIGTGPDREQLISNYKNRDNPKYISSLGQTILNVSRIVPDGLLVFFPSYPMLNQCVDAWQASGLWADISSRKPIFLEPRGKDQFTSTMEEFYQAIRDSKGACFMAVCRGKVSEGLDFADRNGRAVIITGLPFPPLKDPKVILKRRYLETNRTRENQLLSGNEWYNLEATRAVNQAIGRVIRHRNDYGAILLCDARFQDASQVQQLSKWIRNHLGARPQSSPFGPIVRELRQFFKHAEQTIVQPVERAVEPVLHTICSKKEDQLTLAPITQIKREPGNTGTSKFQLASELAAKVEMANSIKTWTPADYANAAGRNAQSPKAPNPMDFMSRLNSNVTSIDFNADSGRDLVKIHKRERSSPTFHNESMGSKKRYRLINNIAQSELKEAPESRADFLREVRSVINSDQFRSFGKALLAYKTGGDDSFETLMLLLLDVMGAPKLRYLLHGMRRYLKNEHKSEFDVRLASLEAAQL</sequence>
<comment type="function">
    <text evidence="2">A probable ATP-dependent DNA helicase implicated in DNA repair and the maintenance of genomic stability. Acts as an anti-recombinase to counteract toxic recombination and limit crossover during meiosis. Regulates meiotic recombination and crossover homeostasis by physically dissociating strand invasion events and thereby promotes noncrossover repair by meiotic synthesis dependent strand annealing (SDSA) as well as disassembly of D loop recombination intermediates.</text>
</comment>
<comment type="catalytic activity">
    <reaction evidence="2">
        <text>ATP + H2O = ADP + phosphate + H(+)</text>
        <dbReference type="Rhea" id="RHEA:13065"/>
        <dbReference type="ChEBI" id="CHEBI:15377"/>
        <dbReference type="ChEBI" id="CHEBI:15378"/>
        <dbReference type="ChEBI" id="CHEBI:30616"/>
        <dbReference type="ChEBI" id="CHEBI:43474"/>
        <dbReference type="ChEBI" id="CHEBI:456216"/>
    </reaction>
</comment>
<comment type="subcellular location">
    <subcellularLocation>
        <location evidence="2">Nucleus</location>
    </subcellularLocation>
</comment>
<comment type="similarity">
    <text evidence="2">Belongs to the helicase family. RAD3/XPD subfamily.</text>
</comment>
<feature type="chain" id="PRO_0000370622" description="Regulator of telomere elongation helicase 1 homolog">
    <location>
        <begin position="1"/>
        <end position="986"/>
    </location>
</feature>
<feature type="domain" description="Helicase ATP-binding" evidence="2">
    <location>
        <begin position="7"/>
        <end position="326"/>
    </location>
</feature>
<feature type="short sequence motif" description="DEAH box">
    <location>
        <begin position="254"/>
        <end position="257"/>
    </location>
</feature>
<feature type="binding site" evidence="2">
    <location>
        <begin position="42"/>
        <end position="49"/>
    </location>
    <ligand>
        <name>ATP</name>
        <dbReference type="ChEBI" id="CHEBI:30616"/>
    </ligand>
</feature>
<feature type="binding site" evidence="2">
    <location>
        <position position="148"/>
    </location>
    <ligand>
        <name>[4Fe-4S] cluster</name>
        <dbReference type="ChEBI" id="CHEBI:49883"/>
    </ligand>
</feature>
<feature type="binding site" evidence="2">
    <location>
        <position position="166"/>
    </location>
    <ligand>
        <name>[4Fe-4S] cluster</name>
        <dbReference type="ChEBI" id="CHEBI:49883"/>
    </ligand>
</feature>
<feature type="binding site" evidence="2">
    <location>
        <position position="175"/>
    </location>
    <ligand>
        <name>[4Fe-4S] cluster</name>
        <dbReference type="ChEBI" id="CHEBI:49883"/>
    </ligand>
</feature>
<feature type="binding site" evidence="2">
    <location>
        <position position="211"/>
    </location>
    <ligand>
        <name>[4Fe-4S] cluster</name>
        <dbReference type="ChEBI" id="CHEBI:49883"/>
    </ligand>
</feature>
<feature type="modified residue" description="Phosphothreonine" evidence="1">
    <location>
        <position position="875"/>
    </location>
</feature>
<keyword id="KW-0004">4Fe-4S</keyword>
<keyword id="KW-0067">ATP-binding</keyword>
<keyword id="KW-0227">DNA damage</keyword>
<keyword id="KW-0234">DNA repair</keyword>
<keyword id="KW-0238">DNA-binding</keyword>
<keyword id="KW-0347">Helicase</keyword>
<keyword id="KW-0378">Hydrolase</keyword>
<keyword id="KW-0408">Iron</keyword>
<keyword id="KW-0411">Iron-sulfur</keyword>
<keyword id="KW-0413">Isomerase</keyword>
<keyword id="KW-0479">Metal-binding</keyword>
<keyword id="KW-0547">Nucleotide-binding</keyword>
<keyword id="KW-0539">Nucleus</keyword>
<keyword id="KW-0597">Phosphoprotein</keyword>
<keyword id="KW-1185">Reference proteome</keyword>